<organism>
    <name type="scientific">Caenorhabditis elegans</name>
    <dbReference type="NCBI Taxonomy" id="6239"/>
    <lineage>
        <taxon>Eukaryota</taxon>
        <taxon>Metazoa</taxon>
        <taxon>Ecdysozoa</taxon>
        <taxon>Nematoda</taxon>
        <taxon>Chromadorea</taxon>
        <taxon>Rhabditida</taxon>
        <taxon>Rhabditina</taxon>
        <taxon>Rhabditomorpha</taxon>
        <taxon>Rhabditoidea</taxon>
        <taxon>Rhabditidae</taxon>
        <taxon>Peloderinae</taxon>
        <taxon>Caenorhabditis</taxon>
    </lineage>
</organism>
<protein>
    <recommendedName>
        <fullName>Uncharacterized protein F59B2.12</fullName>
    </recommendedName>
</protein>
<reference key="1">
    <citation type="journal article" date="1994" name="Nature">
        <title>2.2 Mb of contiguous nucleotide sequence from chromosome III of C. elegans.</title>
        <authorList>
            <person name="Wilson R."/>
            <person name="Ainscough R."/>
            <person name="Anderson K."/>
            <person name="Baynes C."/>
            <person name="Berks M."/>
            <person name="Bonfield J."/>
            <person name="Burton J."/>
            <person name="Connell M."/>
            <person name="Copsey T."/>
            <person name="Cooper J."/>
            <person name="Coulson A."/>
            <person name="Craxton M."/>
            <person name="Dear S."/>
            <person name="Du Z."/>
            <person name="Durbin R."/>
            <person name="Favello A."/>
            <person name="Fraser A."/>
            <person name="Fulton L."/>
            <person name="Gardner A."/>
            <person name="Green P."/>
            <person name="Hawkins T."/>
            <person name="Hillier L."/>
            <person name="Jier M."/>
            <person name="Johnston L."/>
            <person name="Jones M."/>
            <person name="Kershaw J."/>
            <person name="Kirsten J."/>
            <person name="Laisster N."/>
            <person name="Latreille P."/>
            <person name="Lightning J."/>
            <person name="Lloyd C."/>
            <person name="Mortimore B."/>
            <person name="O'Callaghan M."/>
            <person name="Parsons J."/>
            <person name="Percy C."/>
            <person name="Rifken L."/>
            <person name="Roopra A."/>
            <person name="Saunders D."/>
            <person name="Shownkeen R."/>
            <person name="Sims M."/>
            <person name="Smaldon N."/>
            <person name="Smith A."/>
            <person name="Smith M."/>
            <person name="Sonnhammer E."/>
            <person name="Staden R."/>
            <person name="Sulston J."/>
            <person name="Thierry-Mieg J."/>
            <person name="Thomas K."/>
            <person name="Vaudin M."/>
            <person name="Vaughan K."/>
            <person name="Waterston R."/>
            <person name="Watson A."/>
            <person name="Weinstock L."/>
            <person name="Wilkinson-Sproat J."/>
            <person name="Wohldman P."/>
        </authorList>
    </citation>
    <scope>NUCLEOTIDE SEQUENCE [LARGE SCALE GENOMIC DNA]</scope>
    <source>
        <strain>Bristol N2</strain>
    </source>
</reference>
<reference key="2">
    <citation type="journal article" date="1998" name="Science">
        <title>Genome sequence of the nematode C. elegans: a platform for investigating biology.</title>
        <authorList>
            <consortium name="The C. elegans sequencing consortium"/>
        </authorList>
    </citation>
    <scope>NUCLEOTIDE SEQUENCE [LARGE SCALE GENOMIC DNA]</scope>
    <source>
        <strain>Bristol N2</strain>
    </source>
</reference>
<name>YMJB_CAEEL</name>
<sequence length="918" mass="96560">MISPQGVAVATLLILGVVHGSLIDDLKAKFSSSSSGFGASMFSNSGAKSSFGGGFAMPKLDASKAAMVHSSSSHKGHHQSSGSSSNTHSLTVVGADGKNITENSEKKDGYNKESKVDEANENTKIKSADGSVIETGKSHNKSSDDASSYGLEKSSKTYADKNGTMLSSNTNKINNQSRSAALDEGNEFVNQQNADGTFLRNNTGHKNTDEHLSHNVLDENAQMSIGADGTSHNITNRKGSVGDSHNAASDAHSNFESLDAQGNKKSQNYSKKAASASGSNADFESNLESLKNADGTSMSNSTGNFNNTSYDKATAEEVMSKKNVNADGTSSMEASHAGSNSSKINSASGQSSDLSMVGPNGIKSHSTSNKTDNYALDEANQSAGSISEQIGKNGQRSLNESSIESGRKAESRNNTAADTLDSVDANGTVSSSHSKSASGTSLDENHNKTHALQASVDEHGNMKNHSIDGSYRNKKTGEFGNSEMSASIKNADGTMSQVNVKNDTNRNTYEAEKSALEKNHEKNSDGTFKDESKGSNSRVNRTDGGSNLAVGSYSVGKGGVSSNETIASSNAFNTSDAESNQFDHLHQKTANGTEITHAKDSKQVAASANAKSSLDTSMSAVDAKGNKVDKTSSQAADSHDAISASSDVDAKIVKHADRSESISNDSSNQTASEHNDSSKQSEHEKRQNADGSFSDVSSNSAKKNAVKDATDVRQNAFANVDAAGNSVSEVKNSLVENHSNDSDASSDSKIHSKSVDGTELTDAKHSNVSTSHLTEGQLAQIQKKLAMADGSVVMSNDNSHITHEKSRADVDAGHKAHLSKADGSSTDIDEGFKHHSDLESRGEGAQKQRYQKLGNGTESSMDVGYEKSMAKGGDQTSSHKKTLAKDGKGHFTETKDGSESHHKIDDKDVKQHKDIIQM</sequence>
<gene>
    <name type="ORF">F59B2.12</name>
</gene>
<dbReference type="EMBL" id="Z11505">
    <property type="protein sequence ID" value="CAA77581.1"/>
    <property type="molecule type" value="Genomic_DNA"/>
</dbReference>
<dbReference type="PIR" id="G88545">
    <property type="entry name" value="G88545"/>
</dbReference>
<dbReference type="PIR" id="S31132">
    <property type="entry name" value="S31132"/>
</dbReference>
<dbReference type="RefSeq" id="NP_498998.1">
    <property type="nucleotide sequence ID" value="NM_066597.4"/>
</dbReference>
<dbReference type="SMR" id="P34487"/>
<dbReference type="FunCoup" id="P34487">
    <property type="interactions" value="1522"/>
</dbReference>
<dbReference type="STRING" id="6239.F59B2.12.1"/>
<dbReference type="PaxDb" id="6239-F59B2.12"/>
<dbReference type="PeptideAtlas" id="P34487"/>
<dbReference type="EnsemblMetazoa" id="F59B2.12.1">
    <property type="protein sequence ID" value="F59B2.12.1"/>
    <property type="gene ID" value="WBGene00010314"/>
</dbReference>
<dbReference type="GeneID" id="176276"/>
<dbReference type="KEGG" id="cel:CELE_F59B2.12"/>
<dbReference type="UCSC" id="F59B2.12">
    <property type="organism name" value="c. elegans"/>
</dbReference>
<dbReference type="AGR" id="WB:WBGene00010314"/>
<dbReference type="CTD" id="176276"/>
<dbReference type="WormBase" id="F59B2.12">
    <property type="protein sequence ID" value="CE01024"/>
    <property type="gene ID" value="WBGene00010314"/>
</dbReference>
<dbReference type="eggNOG" id="ENOG502R36S">
    <property type="taxonomic scope" value="Eukaryota"/>
</dbReference>
<dbReference type="HOGENOM" id="CLU_317417_0_0_1"/>
<dbReference type="InParanoid" id="P34487"/>
<dbReference type="OMA" id="HKNTDEH"/>
<dbReference type="OrthoDB" id="5820903at2759"/>
<dbReference type="PhylomeDB" id="P34487"/>
<dbReference type="PRO" id="PR:P34487"/>
<dbReference type="Proteomes" id="UP000001940">
    <property type="component" value="Chromosome III"/>
</dbReference>
<dbReference type="Bgee" id="WBGene00010314">
    <property type="expression patterns" value="Expressed in organism subdivision and 6 other cell types or tissues"/>
</dbReference>
<keyword id="KW-1185">Reference proteome</keyword>
<feature type="chain" id="PRO_0000065382" description="Uncharacterized protein F59B2.12">
    <location>
        <begin position="1"/>
        <end position="918"/>
    </location>
</feature>
<feature type="region of interest" description="Disordered" evidence="1">
    <location>
        <begin position="66"/>
        <end position="150"/>
    </location>
</feature>
<feature type="region of interest" description="Disordered" evidence="1">
    <location>
        <begin position="226"/>
        <end position="283"/>
    </location>
</feature>
<feature type="region of interest" description="Disordered" evidence="1">
    <location>
        <begin position="326"/>
        <end position="481"/>
    </location>
</feature>
<feature type="region of interest" description="Disordered" evidence="1">
    <location>
        <begin position="515"/>
        <end position="548"/>
    </location>
</feature>
<feature type="region of interest" description="Disordered" evidence="1">
    <location>
        <begin position="594"/>
        <end position="707"/>
    </location>
</feature>
<feature type="region of interest" description="Disordered" evidence="1">
    <location>
        <begin position="737"/>
        <end position="774"/>
    </location>
</feature>
<feature type="region of interest" description="Disordered" evidence="1">
    <location>
        <begin position="800"/>
        <end position="918"/>
    </location>
</feature>
<feature type="compositionally biased region" description="Low complexity" evidence="1">
    <location>
        <begin position="79"/>
        <end position="89"/>
    </location>
</feature>
<feature type="compositionally biased region" description="Basic and acidic residues" evidence="1">
    <location>
        <begin position="103"/>
        <end position="127"/>
    </location>
</feature>
<feature type="compositionally biased region" description="Low complexity" evidence="1">
    <location>
        <begin position="270"/>
        <end position="281"/>
    </location>
</feature>
<feature type="compositionally biased region" description="Polar residues" evidence="1">
    <location>
        <begin position="326"/>
        <end position="354"/>
    </location>
</feature>
<feature type="compositionally biased region" description="Polar residues" evidence="1">
    <location>
        <begin position="363"/>
        <end position="372"/>
    </location>
</feature>
<feature type="compositionally biased region" description="Polar residues" evidence="1">
    <location>
        <begin position="379"/>
        <end position="404"/>
    </location>
</feature>
<feature type="compositionally biased region" description="Low complexity" evidence="1">
    <location>
        <begin position="430"/>
        <end position="441"/>
    </location>
</feature>
<feature type="compositionally biased region" description="Basic and acidic residues" evidence="1">
    <location>
        <begin position="515"/>
        <end position="533"/>
    </location>
</feature>
<feature type="compositionally biased region" description="Polar residues" evidence="1">
    <location>
        <begin position="534"/>
        <end position="545"/>
    </location>
</feature>
<feature type="compositionally biased region" description="Polar residues" evidence="1">
    <location>
        <begin position="604"/>
        <end position="619"/>
    </location>
</feature>
<feature type="compositionally biased region" description="Low complexity" evidence="1">
    <location>
        <begin position="632"/>
        <end position="647"/>
    </location>
</feature>
<feature type="compositionally biased region" description="Basic and acidic residues" evidence="1">
    <location>
        <begin position="648"/>
        <end position="660"/>
    </location>
</feature>
<feature type="compositionally biased region" description="Polar residues" evidence="1">
    <location>
        <begin position="661"/>
        <end position="672"/>
    </location>
</feature>
<feature type="compositionally biased region" description="Basic and acidic residues" evidence="1">
    <location>
        <begin position="673"/>
        <end position="688"/>
    </location>
</feature>
<feature type="compositionally biased region" description="Polar residues" evidence="1">
    <location>
        <begin position="689"/>
        <end position="702"/>
    </location>
</feature>
<feature type="compositionally biased region" description="Basic and acidic residues" evidence="1">
    <location>
        <begin position="738"/>
        <end position="765"/>
    </location>
</feature>
<feature type="compositionally biased region" description="Basic and acidic residues" evidence="1">
    <location>
        <begin position="800"/>
        <end position="814"/>
    </location>
</feature>
<feature type="compositionally biased region" description="Basic and acidic residues" evidence="1">
    <location>
        <begin position="830"/>
        <end position="846"/>
    </location>
</feature>
<feature type="compositionally biased region" description="Basic and acidic residues" evidence="1">
    <location>
        <begin position="883"/>
        <end position="918"/>
    </location>
</feature>
<accession>P34487</accession>
<evidence type="ECO:0000256" key="1">
    <source>
        <dbReference type="SAM" id="MobiDB-lite"/>
    </source>
</evidence>
<proteinExistence type="predicted"/>